<accession>A7NKS0</accession>
<name>RL27_ROSCS</name>
<organism>
    <name type="scientific">Roseiflexus castenholzii (strain DSM 13941 / HLO8)</name>
    <dbReference type="NCBI Taxonomy" id="383372"/>
    <lineage>
        <taxon>Bacteria</taxon>
        <taxon>Bacillati</taxon>
        <taxon>Chloroflexota</taxon>
        <taxon>Chloroflexia</taxon>
        <taxon>Chloroflexales</taxon>
        <taxon>Roseiflexineae</taxon>
        <taxon>Roseiflexaceae</taxon>
        <taxon>Roseiflexus</taxon>
    </lineage>
</organism>
<dbReference type="EMBL" id="CP000804">
    <property type="protein sequence ID" value="ABU58090.1"/>
    <property type="molecule type" value="Genomic_DNA"/>
</dbReference>
<dbReference type="RefSeq" id="WP_012120514.1">
    <property type="nucleotide sequence ID" value="NC_009767.1"/>
</dbReference>
<dbReference type="SMR" id="A7NKS0"/>
<dbReference type="STRING" id="383372.Rcas_2002"/>
<dbReference type="KEGG" id="rca:Rcas_2002"/>
<dbReference type="eggNOG" id="COG0211">
    <property type="taxonomic scope" value="Bacteria"/>
</dbReference>
<dbReference type="HOGENOM" id="CLU_095424_4_0_0"/>
<dbReference type="OrthoDB" id="9803474at2"/>
<dbReference type="Proteomes" id="UP000000263">
    <property type="component" value="Chromosome"/>
</dbReference>
<dbReference type="GO" id="GO:0022625">
    <property type="term" value="C:cytosolic large ribosomal subunit"/>
    <property type="evidence" value="ECO:0007669"/>
    <property type="project" value="TreeGrafter"/>
</dbReference>
<dbReference type="GO" id="GO:0003735">
    <property type="term" value="F:structural constituent of ribosome"/>
    <property type="evidence" value="ECO:0007669"/>
    <property type="project" value="InterPro"/>
</dbReference>
<dbReference type="GO" id="GO:0006412">
    <property type="term" value="P:translation"/>
    <property type="evidence" value="ECO:0007669"/>
    <property type="project" value="UniProtKB-UniRule"/>
</dbReference>
<dbReference type="FunFam" id="2.40.50.100:FF:000004">
    <property type="entry name" value="50S ribosomal protein L27"/>
    <property type="match status" value="1"/>
</dbReference>
<dbReference type="Gene3D" id="2.40.50.100">
    <property type="match status" value="1"/>
</dbReference>
<dbReference type="HAMAP" id="MF_00539">
    <property type="entry name" value="Ribosomal_bL27"/>
    <property type="match status" value="1"/>
</dbReference>
<dbReference type="InterPro" id="IPR001684">
    <property type="entry name" value="Ribosomal_bL27"/>
</dbReference>
<dbReference type="InterPro" id="IPR018261">
    <property type="entry name" value="Ribosomal_bL27_CS"/>
</dbReference>
<dbReference type="NCBIfam" id="TIGR00062">
    <property type="entry name" value="L27"/>
    <property type="match status" value="1"/>
</dbReference>
<dbReference type="PANTHER" id="PTHR15893:SF0">
    <property type="entry name" value="LARGE RIBOSOMAL SUBUNIT PROTEIN BL27M"/>
    <property type="match status" value="1"/>
</dbReference>
<dbReference type="PANTHER" id="PTHR15893">
    <property type="entry name" value="RIBOSOMAL PROTEIN L27"/>
    <property type="match status" value="1"/>
</dbReference>
<dbReference type="Pfam" id="PF01016">
    <property type="entry name" value="Ribosomal_L27"/>
    <property type="match status" value="1"/>
</dbReference>
<dbReference type="PRINTS" id="PR00063">
    <property type="entry name" value="RIBOSOMALL27"/>
</dbReference>
<dbReference type="SUPFAM" id="SSF110324">
    <property type="entry name" value="Ribosomal L27 protein-like"/>
    <property type="match status" value="1"/>
</dbReference>
<dbReference type="PROSITE" id="PS00831">
    <property type="entry name" value="RIBOSOMAL_L27"/>
    <property type="match status" value="1"/>
</dbReference>
<sequence length="85" mass="9392">MAHKKGVGSSRNGRDSNPKMLGVKRFGGERVKPGMIIVRQRGTKFKPGANVGLGRDYTIYSLIDGVVTFEQHSRNQKRVSVYAAE</sequence>
<evidence type="ECO:0000255" key="1">
    <source>
        <dbReference type="HAMAP-Rule" id="MF_00539"/>
    </source>
</evidence>
<evidence type="ECO:0000256" key="2">
    <source>
        <dbReference type="SAM" id="MobiDB-lite"/>
    </source>
</evidence>
<evidence type="ECO:0000305" key="3"/>
<gene>
    <name evidence="1" type="primary">rpmA</name>
    <name type="ordered locus">Rcas_2002</name>
</gene>
<feature type="chain" id="PRO_1000081905" description="Large ribosomal subunit protein bL27">
    <location>
        <begin position="1"/>
        <end position="85"/>
    </location>
</feature>
<feature type="region of interest" description="Disordered" evidence="2">
    <location>
        <begin position="1"/>
        <end position="25"/>
    </location>
</feature>
<keyword id="KW-1185">Reference proteome</keyword>
<keyword id="KW-0687">Ribonucleoprotein</keyword>
<keyword id="KW-0689">Ribosomal protein</keyword>
<reference key="1">
    <citation type="submission" date="2007-08" db="EMBL/GenBank/DDBJ databases">
        <title>Complete sequence of Roseiflexus castenholzii DSM 13941.</title>
        <authorList>
            <consortium name="US DOE Joint Genome Institute"/>
            <person name="Copeland A."/>
            <person name="Lucas S."/>
            <person name="Lapidus A."/>
            <person name="Barry K."/>
            <person name="Glavina del Rio T."/>
            <person name="Dalin E."/>
            <person name="Tice H."/>
            <person name="Pitluck S."/>
            <person name="Thompson L.S."/>
            <person name="Brettin T."/>
            <person name="Bruce D."/>
            <person name="Detter J.C."/>
            <person name="Han C."/>
            <person name="Tapia R."/>
            <person name="Schmutz J."/>
            <person name="Larimer F."/>
            <person name="Land M."/>
            <person name="Hauser L."/>
            <person name="Kyrpides N."/>
            <person name="Mikhailova N."/>
            <person name="Bryant D.A."/>
            <person name="Hanada S."/>
            <person name="Tsukatani Y."/>
            <person name="Richardson P."/>
        </authorList>
    </citation>
    <scope>NUCLEOTIDE SEQUENCE [LARGE SCALE GENOMIC DNA]</scope>
    <source>
        <strain>DSM 13941 / HLO8</strain>
    </source>
</reference>
<protein>
    <recommendedName>
        <fullName evidence="1">Large ribosomal subunit protein bL27</fullName>
    </recommendedName>
    <alternativeName>
        <fullName evidence="3">50S ribosomal protein L27</fullName>
    </alternativeName>
</protein>
<comment type="similarity">
    <text evidence="1">Belongs to the bacterial ribosomal protein bL27 family.</text>
</comment>
<proteinExistence type="inferred from homology"/>